<dbReference type="EMBL" id="CP000947">
    <property type="protein sequence ID" value="ACA31264.1"/>
    <property type="molecule type" value="Genomic_DNA"/>
</dbReference>
<dbReference type="RefSeq" id="WP_012340650.1">
    <property type="nucleotide sequence ID" value="NC_010519.1"/>
</dbReference>
<dbReference type="SMR" id="B0UUN7"/>
<dbReference type="STRING" id="228400.HSM_1510"/>
<dbReference type="GeneID" id="31487812"/>
<dbReference type="KEGG" id="hsm:HSM_1510"/>
<dbReference type="HOGENOM" id="CLU_037628_6_2_6"/>
<dbReference type="UniPathway" id="UPA00488"/>
<dbReference type="GO" id="GO:0003700">
    <property type="term" value="F:DNA-binding transcription factor activity"/>
    <property type="evidence" value="ECO:0007669"/>
    <property type="project" value="TreeGrafter"/>
</dbReference>
<dbReference type="GO" id="GO:0000976">
    <property type="term" value="F:transcription cis-regulatory region binding"/>
    <property type="evidence" value="ECO:0007669"/>
    <property type="project" value="TreeGrafter"/>
</dbReference>
<dbReference type="GO" id="GO:0045892">
    <property type="term" value="P:negative regulation of DNA-templated transcription"/>
    <property type="evidence" value="ECO:0007669"/>
    <property type="project" value="UniProtKB-UniRule"/>
</dbReference>
<dbReference type="GO" id="GO:0006164">
    <property type="term" value="P:purine nucleotide biosynthetic process"/>
    <property type="evidence" value="ECO:0007669"/>
    <property type="project" value="UniProtKB-UniPathway"/>
</dbReference>
<dbReference type="CDD" id="cd01392">
    <property type="entry name" value="HTH_LacI"/>
    <property type="match status" value="1"/>
</dbReference>
<dbReference type="CDD" id="cd06275">
    <property type="entry name" value="PBP1_PurR"/>
    <property type="match status" value="1"/>
</dbReference>
<dbReference type="FunFam" id="1.10.260.40:FF:000002">
    <property type="entry name" value="HTH-type transcriptional repressor PurR"/>
    <property type="match status" value="1"/>
</dbReference>
<dbReference type="Gene3D" id="3.40.50.2300">
    <property type="match status" value="2"/>
</dbReference>
<dbReference type="Gene3D" id="1.10.260.40">
    <property type="entry name" value="lambda repressor-like DNA-binding domains"/>
    <property type="match status" value="1"/>
</dbReference>
<dbReference type="HAMAP" id="MF_01277">
    <property type="entry name" value="HTH_type_PurR"/>
    <property type="match status" value="1"/>
</dbReference>
<dbReference type="InterPro" id="IPR000843">
    <property type="entry name" value="HTH_LacI"/>
</dbReference>
<dbReference type="InterPro" id="IPR046335">
    <property type="entry name" value="LacI/GalR-like_sensor"/>
</dbReference>
<dbReference type="InterPro" id="IPR010982">
    <property type="entry name" value="Lambda_DNA-bd_dom_sf"/>
</dbReference>
<dbReference type="InterPro" id="IPR028082">
    <property type="entry name" value="Peripla_BP_I"/>
</dbReference>
<dbReference type="InterPro" id="IPR023588">
    <property type="entry name" value="Tscrpt_reg_HTH_PurR"/>
</dbReference>
<dbReference type="NCBIfam" id="NF007979">
    <property type="entry name" value="PRK10703.1"/>
    <property type="match status" value="1"/>
</dbReference>
<dbReference type="PANTHER" id="PTHR30146:SF148">
    <property type="entry name" value="HTH-TYPE TRANSCRIPTIONAL REPRESSOR PURR-RELATED"/>
    <property type="match status" value="1"/>
</dbReference>
<dbReference type="PANTHER" id="PTHR30146">
    <property type="entry name" value="LACI-RELATED TRANSCRIPTIONAL REPRESSOR"/>
    <property type="match status" value="1"/>
</dbReference>
<dbReference type="Pfam" id="PF00356">
    <property type="entry name" value="LacI"/>
    <property type="match status" value="1"/>
</dbReference>
<dbReference type="Pfam" id="PF13377">
    <property type="entry name" value="Peripla_BP_3"/>
    <property type="match status" value="1"/>
</dbReference>
<dbReference type="PRINTS" id="PR00036">
    <property type="entry name" value="HTHLACI"/>
</dbReference>
<dbReference type="SMART" id="SM00354">
    <property type="entry name" value="HTH_LACI"/>
    <property type="match status" value="1"/>
</dbReference>
<dbReference type="SUPFAM" id="SSF47413">
    <property type="entry name" value="lambda repressor-like DNA-binding domains"/>
    <property type="match status" value="1"/>
</dbReference>
<dbReference type="SUPFAM" id="SSF53822">
    <property type="entry name" value="Periplasmic binding protein-like I"/>
    <property type="match status" value="1"/>
</dbReference>
<dbReference type="PROSITE" id="PS00356">
    <property type="entry name" value="HTH_LACI_1"/>
    <property type="match status" value="1"/>
</dbReference>
<dbReference type="PROSITE" id="PS50932">
    <property type="entry name" value="HTH_LACI_2"/>
    <property type="match status" value="1"/>
</dbReference>
<proteinExistence type="inferred from homology"/>
<name>PURR_HISS2</name>
<keyword id="KW-0238">DNA-binding</keyword>
<keyword id="KW-0658">Purine biosynthesis</keyword>
<keyword id="KW-0678">Repressor</keyword>
<keyword id="KW-0804">Transcription</keyword>
<keyword id="KW-0805">Transcription regulation</keyword>
<feature type="chain" id="PRO_1000085873" description="HTH-type transcriptional repressor PurR">
    <location>
        <begin position="1"/>
        <end position="333"/>
    </location>
</feature>
<feature type="domain" description="HTH lacI-type" evidence="1">
    <location>
        <begin position="2"/>
        <end position="56"/>
    </location>
</feature>
<feature type="DNA-binding region" description="H-T-H motif" evidence="1">
    <location>
        <begin position="4"/>
        <end position="23"/>
    </location>
</feature>
<feature type="DNA-binding region" evidence="1">
    <location>
        <begin position="48"/>
        <end position="56"/>
    </location>
</feature>
<feature type="binding site" evidence="1">
    <location>
        <position position="73"/>
    </location>
    <ligand>
        <name>hypoxanthine</name>
        <dbReference type="ChEBI" id="CHEBI:17368"/>
    </ligand>
</feature>
<feature type="binding site" evidence="1">
    <location>
        <position position="189"/>
    </location>
    <ligand>
        <name>hypoxanthine</name>
        <dbReference type="ChEBI" id="CHEBI:17368"/>
    </ligand>
</feature>
<feature type="binding site" evidence="1">
    <location>
        <position position="191"/>
    </location>
    <ligand>
        <name>hypoxanthine</name>
        <dbReference type="ChEBI" id="CHEBI:17368"/>
    </ligand>
</feature>
<feature type="binding site" evidence="1">
    <location>
        <position position="220"/>
    </location>
    <ligand>
        <name>hypoxanthine</name>
        <dbReference type="ChEBI" id="CHEBI:17368"/>
    </ligand>
</feature>
<feature type="binding site" evidence="1">
    <location>
        <position position="274"/>
    </location>
    <ligand>
        <name>hypoxanthine</name>
        <dbReference type="ChEBI" id="CHEBI:17368"/>
    </ligand>
</feature>
<protein>
    <recommendedName>
        <fullName evidence="1">HTH-type transcriptional repressor PurR</fullName>
    </recommendedName>
    <alternativeName>
        <fullName evidence="1">Pur regulon repressor</fullName>
    </alternativeName>
    <alternativeName>
        <fullName evidence="1">Purine nucleotide synthesis repressor</fullName>
    </alternativeName>
</protein>
<sequence>MATIKDVAKMAGVSTTTVSHVINKTRFVAKETEQQVLQAIKNLNYSPSAVARSLKVNTTKSIGMIVTTCETPYFAEIIHSVEELCYRQGYSLFLCNTQNNPEKIKNHLDMLAKKRVDGLLVMCAEYTQNSLNLLAAFEDLPMVVMDWGPFNENTDLIQDNSFSGGYIATKYLIDNGHKDIAIISGELKKTTAVMRYQGFEKAMQEANLAINPDWIMEGFFEPEDGYECMNKILVQDKLPTAVFCCNDVMALGAISAIGEKSLKVPDDISVIGYDNIHASRFFSPPLTTIHQSKSRLGVQAINLLFKRISEKGKEHEIIEIYPELVIRKSVKTL</sequence>
<evidence type="ECO:0000255" key="1">
    <source>
        <dbReference type="HAMAP-Rule" id="MF_01277"/>
    </source>
</evidence>
<accession>B0UUN7</accession>
<comment type="function">
    <text evidence="1">Is the main repressor of the genes involved in the de novo synthesis of purine nucleotides, regulating purB, purC, purEK, purF, purHD, purL, purMN and guaBA expression. PurR is allosterically activated to bind its cognate DNA by binding the purine corepressors, hypoxanthine or guanine, thereby effecting transcription repression.</text>
</comment>
<comment type="pathway">
    <text>Purine metabolism; purine nucleotide biosynthesis [regulation].</text>
</comment>
<comment type="subunit">
    <text evidence="1">Homodimer.</text>
</comment>
<comment type="domain">
    <text evidence="1">Consists of two structural and functional domains: an N-terminal DNA-binding domain, approximately the first 60 residues, and a larger C-terminal domain, approximately 280 residues, which imparts the function of corepressor binding and oligomerization.</text>
</comment>
<gene>
    <name evidence="1" type="primary">purR</name>
    <name type="ordered locus">HSM_1510</name>
</gene>
<reference key="1">
    <citation type="submission" date="2008-02" db="EMBL/GenBank/DDBJ databases">
        <title>Complete sequence of Haemophilus somnus 2336.</title>
        <authorList>
            <consortium name="US DOE Joint Genome Institute"/>
            <person name="Siddaramappa S."/>
            <person name="Duncan A.J."/>
            <person name="Challacombe J.F."/>
            <person name="Rainey D."/>
            <person name="Gillaspy A.F."/>
            <person name="Carson M."/>
            <person name="Gipson J."/>
            <person name="Gipson M."/>
            <person name="Bruce D."/>
            <person name="Detter J.C."/>
            <person name="Han C.S."/>
            <person name="Land M."/>
            <person name="Tapia R."/>
            <person name="Thompson L.S."/>
            <person name="Orvis J."/>
            <person name="Zaitshik J."/>
            <person name="Barnes G."/>
            <person name="Brettin T.S."/>
            <person name="Dyer D.W."/>
            <person name="Inzana T.J."/>
        </authorList>
    </citation>
    <scope>NUCLEOTIDE SEQUENCE [LARGE SCALE GENOMIC DNA]</scope>
    <source>
        <strain>2336</strain>
    </source>
</reference>
<organism>
    <name type="scientific">Histophilus somni (strain 2336)</name>
    <name type="common">Haemophilus somnus</name>
    <dbReference type="NCBI Taxonomy" id="228400"/>
    <lineage>
        <taxon>Bacteria</taxon>
        <taxon>Pseudomonadati</taxon>
        <taxon>Pseudomonadota</taxon>
        <taxon>Gammaproteobacteria</taxon>
        <taxon>Pasteurellales</taxon>
        <taxon>Pasteurellaceae</taxon>
        <taxon>Histophilus</taxon>
    </lineage>
</organism>